<organism>
    <name type="scientific">Yarrowia lipolytica (strain CLIB 122 / E 150)</name>
    <name type="common">Yeast</name>
    <name type="synonym">Candida lipolytica</name>
    <dbReference type="NCBI Taxonomy" id="284591"/>
    <lineage>
        <taxon>Eukaryota</taxon>
        <taxon>Fungi</taxon>
        <taxon>Dikarya</taxon>
        <taxon>Ascomycota</taxon>
        <taxon>Saccharomycotina</taxon>
        <taxon>Dipodascomycetes</taxon>
        <taxon>Dipodascales</taxon>
        <taxon>Dipodascales incertae sedis</taxon>
        <taxon>Yarrowia</taxon>
    </lineage>
</organism>
<sequence length="382" mass="42773">MSEAPESIETSPVVTPDVAESVQNQGVEVVQTEAPTEAQVVKTKSKKKRTKDPALYHTRKARIQVDPDSVNTDDRPPQTGTVYNIWFNKWSGGDKEDEKFNQKKADGRCSIARDSGYTRADKVPGSYFCLYFARGLCTQGHKCEFLHRLPVLTDMFSPTTDCFGRDRFFDYRDDMGGIGSISRVNRTLYVGRIHVSDAAKAGALDEIVSRHFSEWGDVDRIRVLHDKGVAFVTYATEVNAQFAKEAMAHQSLDSGEVLNVRWATQDPDPLAQAREQRRLEENAAEAIKRLLPQEYVDELEGRAKKSKPLLEGYEEDDSEKLKRIMNNQKEAGAEPAEEVKQIEPAPEPAAPVSTDTGMFNKSSLSALKALKKKKKTKAKVEE</sequence>
<reference key="1">
    <citation type="journal article" date="2004" name="Nature">
        <title>Genome evolution in yeasts.</title>
        <authorList>
            <person name="Dujon B."/>
            <person name="Sherman D."/>
            <person name="Fischer G."/>
            <person name="Durrens P."/>
            <person name="Casaregola S."/>
            <person name="Lafontaine I."/>
            <person name="de Montigny J."/>
            <person name="Marck C."/>
            <person name="Neuveglise C."/>
            <person name="Talla E."/>
            <person name="Goffard N."/>
            <person name="Frangeul L."/>
            <person name="Aigle M."/>
            <person name="Anthouard V."/>
            <person name="Babour A."/>
            <person name="Barbe V."/>
            <person name="Barnay S."/>
            <person name="Blanchin S."/>
            <person name="Beckerich J.-M."/>
            <person name="Beyne E."/>
            <person name="Bleykasten C."/>
            <person name="Boisrame A."/>
            <person name="Boyer J."/>
            <person name="Cattolico L."/>
            <person name="Confanioleri F."/>
            <person name="de Daruvar A."/>
            <person name="Despons L."/>
            <person name="Fabre E."/>
            <person name="Fairhead C."/>
            <person name="Ferry-Dumazet H."/>
            <person name="Groppi A."/>
            <person name="Hantraye F."/>
            <person name="Hennequin C."/>
            <person name="Jauniaux N."/>
            <person name="Joyet P."/>
            <person name="Kachouri R."/>
            <person name="Kerrest A."/>
            <person name="Koszul R."/>
            <person name="Lemaire M."/>
            <person name="Lesur I."/>
            <person name="Ma L."/>
            <person name="Muller H."/>
            <person name="Nicaud J.-M."/>
            <person name="Nikolski M."/>
            <person name="Oztas S."/>
            <person name="Ozier-Kalogeropoulos O."/>
            <person name="Pellenz S."/>
            <person name="Potier S."/>
            <person name="Richard G.-F."/>
            <person name="Straub M.-L."/>
            <person name="Suleau A."/>
            <person name="Swennen D."/>
            <person name="Tekaia F."/>
            <person name="Wesolowski-Louvel M."/>
            <person name="Westhof E."/>
            <person name="Wirth B."/>
            <person name="Zeniou-Meyer M."/>
            <person name="Zivanovic Y."/>
            <person name="Bolotin-Fukuhara M."/>
            <person name="Thierry A."/>
            <person name="Bouchier C."/>
            <person name="Caudron B."/>
            <person name="Scarpelli C."/>
            <person name="Gaillardin C."/>
            <person name="Weissenbach J."/>
            <person name="Wincker P."/>
            <person name="Souciet J.-L."/>
        </authorList>
    </citation>
    <scope>NUCLEOTIDE SEQUENCE [LARGE SCALE GENOMIC DNA]</scope>
    <source>
        <strain>CLIB 122 / E 150</strain>
    </source>
</reference>
<proteinExistence type="inferred from homology"/>
<protein>
    <recommendedName>
        <fullName>Pre-mRNA-splicing factor CWC2</fullName>
    </recommendedName>
</protein>
<keyword id="KW-0131">Cell cycle</keyword>
<keyword id="KW-0479">Metal-binding</keyword>
<keyword id="KW-0507">mRNA processing</keyword>
<keyword id="KW-0508">mRNA splicing</keyword>
<keyword id="KW-0539">Nucleus</keyword>
<keyword id="KW-1185">Reference proteome</keyword>
<keyword id="KW-0694">RNA-binding</keyword>
<keyword id="KW-0747">Spliceosome</keyword>
<keyword id="KW-0862">Zinc</keyword>
<keyword id="KW-0863">Zinc-finger</keyword>
<dbReference type="EMBL" id="CR382132">
    <property type="protein sequence ID" value="CAG78817.1"/>
    <property type="molecule type" value="Genomic_DNA"/>
</dbReference>
<dbReference type="RefSeq" id="XP_506005.1">
    <property type="nucleotide sequence ID" value="XM_506005.1"/>
</dbReference>
<dbReference type="SMR" id="Q6C007"/>
<dbReference type="FunCoup" id="Q6C007">
    <property type="interactions" value="193"/>
</dbReference>
<dbReference type="STRING" id="284591.Q6C007"/>
<dbReference type="EnsemblFungi" id="CAG78817">
    <property type="protein sequence ID" value="CAG78817"/>
    <property type="gene ID" value="YALI0_F29073g"/>
</dbReference>
<dbReference type="KEGG" id="yli:2908799"/>
<dbReference type="VEuPathDB" id="FungiDB:YALI0_F29073g"/>
<dbReference type="HOGENOM" id="CLU_043308_1_0_1"/>
<dbReference type="InParanoid" id="Q6C007"/>
<dbReference type="OMA" id="WYNKWSQ"/>
<dbReference type="OrthoDB" id="62703at4891"/>
<dbReference type="Proteomes" id="UP000001300">
    <property type="component" value="Chromosome F"/>
</dbReference>
<dbReference type="GO" id="GO:0071014">
    <property type="term" value="C:post-mRNA release spliceosomal complex"/>
    <property type="evidence" value="ECO:0007669"/>
    <property type="project" value="EnsemblFungi"/>
</dbReference>
<dbReference type="GO" id="GO:0000974">
    <property type="term" value="C:Prp19 complex"/>
    <property type="evidence" value="ECO:0000250"/>
    <property type="project" value="UniProtKB"/>
</dbReference>
<dbReference type="GO" id="GO:0071006">
    <property type="term" value="C:U2-type catalytic step 1 spliceosome"/>
    <property type="evidence" value="ECO:0000318"/>
    <property type="project" value="GO_Central"/>
</dbReference>
<dbReference type="GO" id="GO:0071007">
    <property type="term" value="C:U2-type catalytic step 2 spliceosome"/>
    <property type="evidence" value="ECO:0000318"/>
    <property type="project" value="GO_Central"/>
</dbReference>
<dbReference type="GO" id="GO:0036002">
    <property type="term" value="F:pre-mRNA binding"/>
    <property type="evidence" value="ECO:0000250"/>
    <property type="project" value="UniProtKB"/>
</dbReference>
<dbReference type="GO" id="GO:0017070">
    <property type="term" value="F:U6 snRNA binding"/>
    <property type="evidence" value="ECO:0000250"/>
    <property type="project" value="UniProtKB"/>
</dbReference>
<dbReference type="GO" id="GO:0008270">
    <property type="term" value="F:zinc ion binding"/>
    <property type="evidence" value="ECO:0007669"/>
    <property type="project" value="UniProtKB-KW"/>
</dbReference>
<dbReference type="GO" id="GO:0045292">
    <property type="term" value="P:mRNA cis splicing, via spliceosome"/>
    <property type="evidence" value="ECO:0000250"/>
    <property type="project" value="UniProtKB"/>
</dbReference>
<dbReference type="GO" id="GO:0045787">
    <property type="term" value="P:positive regulation of cell cycle"/>
    <property type="evidence" value="ECO:0000250"/>
    <property type="project" value="UniProtKB"/>
</dbReference>
<dbReference type="GO" id="GO:0033120">
    <property type="term" value="P:positive regulation of RNA splicing"/>
    <property type="evidence" value="ECO:0000250"/>
    <property type="project" value="UniProtKB"/>
</dbReference>
<dbReference type="GO" id="GO:0000387">
    <property type="term" value="P:spliceosomal snRNP assembly"/>
    <property type="evidence" value="ECO:0000250"/>
    <property type="project" value="UniProtKB"/>
</dbReference>
<dbReference type="CDD" id="cd12360">
    <property type="entry name" value="RRM_cwf2"/>
    <property type="match status" value="1"/>
</dbReference>
<dbReference type="FunFam" id="3.30.70.330:FF:000249">
    <property type="entry name" value="Pre-mRNA-splicing factor CWC2, variant"/>
    <property type="match status" value="1"/>
</dbReference>
<dbReference type="Gene3D" id="3.30.70.330">
    <property type="match status" value="1"/>
</dbReference>
<dbReference type="InterPro" id="IPR039171">
    <property type="entry name" value="Cwc2/Slt11"/>
</dbReference>
<dbReference type="InterPro" id="IPR034181">
    <property type="entry name" value="Cwc2_RRM"/>
</dbReference>
<dbReference type="InterPro" id="IPR012677">
    <property type="entry name" value="Nucleotide-bd_a/b_plait_sf"/>
</dbReference>
<dbReference type="InterPro" id="IPR035979">
    <property type="entry name" value="RBD_domain_sf"/>
</dbReference>
<dbReference type="InterPro" id="IPR000504">
    <property type="entry name" value="RRM_dom"/>
</dbReference>
<dbReference type="InterPro" id="IPR032297">
    <property type="entry name" value="Torus"/>
</dbReference>
<dbReference type="InterPro" id="IPR000571">
    <property type="entry name" value="Znf_CCCH"/>
</dbReference>
<dbReference type="InterPro" id="IPR036855">
    <property type="entry name" value="Znf_CCCH_sf"/>
</dbReference>
<dbReference type="PANTHER" id="PTHR14089:SF2">
    <property type="entry name" value="PRE-MRNA-SPLICING FACTOR CWC2"/>
    <property type="match status" value="1"/>
</dbReference>
<dbReference type="PANTHER" id="PTHR14089">
    <property type="entry name" value="PRE-MRNA-SPLICING FACTOR RBM22"/>
    <property type="match status" value="1"/>
</dbReference>
<dbReference type="Pfam" id="PF00076">
    <property type="entry name" value="RRM_1"/>
    <property type="match status" value="1"/>
</dbReference>
<dbReference type="Pfam" id="PF16131">
    <property type="entry name" value="Torus"/>
    <property type="match status" value="1"/>
</dbReference>
<dbReference type="SMART" id="SM00360">
    <property type="entry name" value="RRM"/>
    <property type="match status" value="1"/>
</dbReference>
<dbReference type="SUPFAM" id="SSF90229">
    <property type="entry name" value="CCCH zinc finger"/>
    <property type="match status" value="1"/>
</dbReference>
<dbReference type="SUPFAM" id="SSF54928">
    <property type="entry name" value="RNA-binding domain, RBD"/>
    <property type="match status" value="1"/>
</dbReference>
<dbReference type="PROSITE" id="PS50102">
    <property type="entry name" value="RRM"/>
    <property type="match status" value="1"/>
</dbReference>
<dbReference type="PROSITE" id="PS50103">
    <property type="entry name" value="ZF_C3H1"/>
    <property type="match status" value="1"/>
</dbReference>
<accession>Q6C007</accession>
<evidence type="ECO:0000250" key="1"/>
<evidence type="ECO:0000255" key="2">
    <source>
        <dbReference type="PROSITE-ProRule" id="PRU00176"/>
    </source>
</evidence>
<evidence type="ECO:0000255" key="3">
    <source>
        <dbReference type="PROSITE-ProRule" id="PRU00723"/>
    </source>
</evidence>
<evidence type="ECO:0000256" key="4">
    <source>
        <dbReference type="SAM" id="MobiDB-lite"/>
    </source>
</evidence>
<evidence type="ECO:0000305" key="5"/>
<comment type="function">
    <text evidence="1">Involved in the first step of pre-mRNA splicing. Required for cell growth and cell cycle control. Plays a role in the levels of the U1, U4, U5 and U6 snRNAs and the maintenance of the U4/U6 snRNA complex. May provide the link between the 'nineteen complex' NTC spliceosome protein complex and the spliceosome through the U6 snRNA. Associates predominantly with U6 snRNAs in assembled active spliceosomes. Binds directly to the internal stem-loop (ISL) domain of the U6 snRNA and to the pre-mRNA intron near the 5' splice site during the activation and catalytic phases of the spliceosome cycle (By similarity).</text>
</comment>
<comment type="subunit">
    <text evidence="1">Associated with the spliceosome.</text>
</comment>
<comment type="subcellular location">
    <subcellularLocation>
        <location evidence="1">Nucleus</location>
    </subcellularLocation>
</comment>
<comment type="domain">
    <text evidence="1">The C-terminal RRM domain and the zinc finger motif are necessary for RNA-binding.</text>
</comment>
<comment type="similarity">
    <text evidence="5">Belongs to the RRM CWC2 family.</text>
</comment>
<gene>
    <name type="primary">CWC2</name>
    <name type="ordered locus">YALI0F29073g</name>
</gene>
<name>CWC2_YARLI</name>
<feature type="chain" id="PRO_0000081551" description="Pre-mRNA-splicing factor CWC2">
    <location>
        <begin position="1"/>
        <end position="382"/>
    </location>
</feature>
<feature type="domain" description="RRM" evidence="2">
    <location>
        <begin position="186"/>
        <end position="265"/>
    </location>
</feature>
<feature type="zinc finger region" description="C3H1-type" evidence="3">
    <location>
        <begin position="124"/>
        <end position="150"/>
    </location>
</feature>
<feature type="region of interest" description="Disordered" evidence="4">
    <location>
        <begin position="307"/>
        <end position="358"/>
    </location>
</feature>